<sequence length="550" mass="57630">MSEDLKRSASDIQDELAQSPKRVKFNDPPQIDDVNKYDANNVNANANVNANANVNANANDSNSNNFASIASNVTTNPIDFTVTQPQPVSPEIQNPITTLLQTDPGVGASKDLLTTNGSAINITKNADTNNIETNTASINPVSNTNTNTKPASVDTVDIKSVSANTADTATDTKPVSADNADTATDTKPVSADTADTADTDADAKPASANTSNTTNANTAGTGASNTDVANSSSATTSTGDAKPQVQGANETGSNQHDQRDSSKLNDAIAAAGVDIQKEEELLQQRQLNRKPGAPSEKQDGSKSQTQVPLLNPYHLSAFLAKVSKTHQIHQNFLEDGNLLNLISDACEDWLSHIASKALILSRHRRRGTQFSLKKGGLSSLTQLSQQRSAVSKELRNLALRQKEMEEKRVQKRIVLGLEKSSGNGTDDAANGKPGSEETLHRAANATAAMMATGKKKYSWMSSGGGGAGSIGSLGDDARGSGVGIGGGGVGGGDSKTKQSAILSARGDNGLRYRDLRSTNAIVLKDLLNALEGEKKGTQHAITKGYAKLRD</sequence>
<comment type="function">
    <text evidence="1">Functions as a component of the DNA-binding general transcription factor complex TFIID. Binding of TFIID to a promoter (with or without TATA element) is the initial step in pre-initiation complex (PIC) formation. TFIID plays a key role in the regulation of gene expression by RNA polymerase II through different activities such as transcription activator interaction, core promoter recognition and selectivity, TFIIA and TFIIB interaction, chromatin modification (histone acetylation by TAF1), facilitation of DNA opening and initiation of transcription (By similarity).</text>
</comment>
<comment type="subunit">
    <text evidence="1">The 1.2 MDa TFIID complex is composed of TATA binding protein (TBP) and the 14 TBP-associated factors.</text>
</comment>
<comment type="subcellular location">
    <subcellularLocation>
        <location evidence="1">Nucleus</location>
    </subcellularLocation>
</comment>
<comment type="similarity">
    <text evidence="4">Belongs to the TAF4 family.</text>
</comment>
<name>TAF4_LODEL</name>
<keyword id="KW-0175">Coiled coil</keyword>
<keyword id="KW-0539">Nucleus</keyword>
<keyword id="KW-1185">Reference proteome</keyword>
<keyword id="KW-0804">Transcription</keyword>
<keyword id="KW-0805">Transcription regulation</keyword>
<evidence type="ECO:0000250" key="1"/>
<evidence type="ECO:0000255" key="2"/>
<evidence type="ECO:0000256" key="3">
    <source>
        <dbReference type="SAM" id="MobiDB-lite"/>
    </source>
</evidence>
<evidence type="ECO:0000305" key="4"/>
<protein>
    <recommendedName>
        <fullName>Transcription initiation factor TFIID subunit 4</fullName>
    </recommendedName>
    <alternativeName>
        <fullName>TBP-associated factor 4</fullName>
    </alternativeName>
</protein>
<reference key="1">
    <citation type="journal article" date="2009" name="Nature">
        <title>Evolution of pathogenicity and sexual reproduction in eight Candida genomes.</title>
        <authorList>
            <person name="Butler G."/>
            <person name="Rasmussen M.D."/>
            <person name="Lin M.F."/>
            <person name="Santos M.A.S."/>
            <person name="Sakthikumar S."/>
            <person name="Munro C.A."/>
            <person name="Rheinbay E."/>
            <person name="Grabherr M."/>
            <person name="Forche A."/>
            <person name="Reedy J.L."/>
            <person name="Agrafioti I."/>
            <person name="Arnaud M.B."/>
            <person name="Bates S."/>
            <person name="Brown A.J.P."/>
            <person name="Brunke S."/>
            <person name="Costanzo M.C."/>
            <person name="Fitzpatrick D.A."/>
            <person name="de Groot P.W.J."/>
            <person name="Harris D."/>
            <person name="Hoyer L.L."/>
            <person name="Hube B."/>
            <person name="Klis F.M."/>
            <person name="Kodira C."/>
            <person name="Lennard N."/>
            <person name="Logue M.E."/>
            <person name="Martin R."/>
            <person name="Neiman A.M."/>
            <person name="Nikolaou E."/>
            <person name="Quail M.A."/>
            <person name="Quinn J."/>
            <person name="Santos M.C."/>
            <person name="Schmitzberger F.F."/>
            <person name="Sherlock G."/>
            <person name="Shah P."/>
            <person name="Silverstein K.A.T."/>
            <person name="Skrzypek M.S."/>
            <person name="Soll D."/>
            <person name="Staggs R."/>
            <person name="Stansfield I."/>
            <person name="Stumpf M.P.H."/>
            <person name="Sudbery P.E."/>
            <person name="Srikantha T."/>
            <person name="Zeng Q."/>
            <person name="Berman J."/>
            <person name="Berriman M."/>
            <person name="Heitman J."/>
            <person name="Gow N.A.R."/>
            <person name="Lorenz M.C."/>
            <person name="Birren B.W."/>
            <person name="Kellis M."/>
            <person name="Cuomo C.A."/>
        </authorList>
    </citation>
    <scope>NUCLEOTIDE SEQUENCE [LARGE SCALE GENOMIC DNA]</scope>
    <source>
        <strain>ATCC 11503 / BCRC 21390 / CBS 2605 / JCM 1781 / NBRC 1676 / NRRL YB-4239</strain>
    </source>
</reference>
<gene>
    <name type="primary">TAF4</name>
    <name type="ORF">LELG_02470</name>
</gene>
<feature type="chain" id="PRO_0000343441" description="Transcription initiation factor TFIID subunit 4">
    <location>
        <begin position="1"/>
        <end position="550"/>
    </location>
</feature>
<feature type="domain" description="Histone-fold">
    <location>
        <begin position="316"/>
        <end position="396"/>
    </location>
</feature>
<feature type="region of interest" description="Disordered" evidence="3">
    <location>
        <begin position="1"/>
        <end position="29"/>
    </location>
</feature>
<feature type="region of interest" description="Disordered" evidence="3">
    <location>
        <begin position="165"/>
        <end position="262"/>
    </location>
</feature>
<feature type="region of interest" description="Disordered" evidence="3">
    <location>
        <begin position="287"/>
        <end position="307"/>
    </location>
</feature>
<feature type="coiled-coil region" evidence="2">
    <location>
        <begin position="380"/>
        <end position="412"/>
    </location>
</feature>
<feature type="compositionally biased region" description="Polar residues" evidence="3">
    <location>
        <begin position="165"/>
        <end position="187"/>
    </location>
</feature>
<feature type="compositionally biased region" description="Low complexity" evidence="3">
    <location>
        <begin position="206"/>
        <end position="226"/>
    </location>
</feature>
<feature type="compositionally biased region" description="Polar residues" evidence="3">
    <location>
        <begin position="227"/>
        <end position="239"/>
    </location>
</feature>
<feature type="compositionally biased region" description="Polar residues" evidence="3">
    <location>
        <begin position="246"/>
        <end position="255"/>
    </location>
</feature>
<organism>
    <name type="scientific">Lodderomyces elongisporus (strain ATCC 11503 / CBS 2605 / JCM 1781 / NBRC 1676 / NRRL YB-4239)</name>
    <name type="common">Yeast</name>
    <name type="synonym">Saccharomyces elongisporus</name>
    <dbReference type="NCBI Taxonomy" id="379508"/>
    <lineage>
        <taxon>Eukaryota</taxon>
        <taxon>Fungi</taxon>
        <taxon>Dikarya</taxon>
        <taxon>Ascomycota</taxon>
        <taxon>Saccharomycotina</taxon>
        <taxon>Pichiomycetes</taxon>
        <taxon>Debaryomycetaceae</taxon>
        <taxon>Candida/Lodderomyces clade</taxon>
        <taxon>Lodderomyces</taxon>
    </lineage>
</organism>
<dbReference type="EMBL" id="CH981526">
    <property type="protein sequence ID" value="EDK44291.1"/>
    <property type="molecule type" value="Genomic_DNA"/>
</dbReference>
<dbReference type="RefSeq" id="XP_001525912.1">
    <property type="nucleotide sequence ID" value="XM_001525862.1"/>
</dbReference>
<dbReference type="SMR" id="A5DYN3"/>
<dbReference type="FunCoup" id="A5DYN3">
    <property type="interactions" value="318"/>
</dbReference>
<dbReference type="STRING" id="379508.A5DYN3"/>
<dbReference type="GeneID" id="5233367"/>
<dbReference type="KEGG" id="lel:PVL30_003310"/>
<dbReference type="VEuPathDB" id="FungiDB:LELG_02470"/>
<dbReference type="eggNOG" id="KOG2341">
    <property type="taxonomic scope" value="Eukaryota"/>
</dbReference>
<dbReference type="HOGENOM" id="CLU_036634_1_0_1"/>
<dbReference type="InParanoid" id="A5DYN3"/>
<dbReference type="OrthoDB" id="21060at2759"/>
<dbReference type="Proteomes" id="UP000001996">
    <property type="component" value="Unassembled WGS sequence"/>
</dbReference>
<dbReference type="GO" id="GO:0005669">
    <property type="term" value="C:transcription factor TFIID complex"/>
    <property type="evidence" value="ECO:0007669"/>
    <property type="project" value="InterPro"/>
</dbReference>
<dbReference type="GO" id="GO:0006352">
    <property type="term" value="P:DNA-templated transcription initiation"/>
    <property type="evidence" value="ECO:0007669"/>
    <property type="project" value="InterPro"/>
</dbReference>
<dbReference type="InterPro" id="IPR007900">
    <property type="entry name" value="TAF4_C"/>
</dbReference>
<dbReference type="Pfam" id="PF05236">
    <property type="entry name" value="TAF4"/>
    <property type="match status" value="1"/>
</dbReference>
<proteinExistence type="inferred from homology"/>
<accession>A5DYN3</accession>